<protein>
    <recommendedName>
        <fullName evidence="1">ATP-dependent lipid A-core flippase</fullName>
        <ecNumber evidence="1">7.5.2.6</ecNumber>
    </recommendedName>
    <alternativeName>
        <fullName evidence="1">Lipid A export ATP-binding/permease protein MsbA</fullName>
    </alternativeName>
</protein>
<keyword id="KW-0067">ATP-binding</keyword>
<keyword id="KW-1003">Cell membrane</keyword>
<keyword id="KW-0445">Lipid transport</keyword>
<keyword id="KW-0472">Membrane</keyword>
<keyword id="KW-0547">Nucleotide-binding</keyword>
<keyword id="KW-1278">Translocase</keyword>
<keyword id="KW-0812">Transmembrane</keyword>
<keyword id="KW-1133">Transmembrane helix</keyword>
<keyword id="KW-0813">Transport</keyword>
<gene>
    <name evidence="1" type="primary">msbA</name>
    <name type="synonym">valA</name>
</gene>
<name>MSBA_FRANO</name>
<comment type="function">
    <text evidence="1 2">Involved in lipopolysaccharide (LPS) biosynthesis. Translocates lipid A-core from the inner to the outer leaflet of the inner membrane. Transmembrane domains (TMD) form a pore in the inner membrane and the ATP-binding domain (NBD) is responsible for energy generation.</text>
</comment>
<comment type="catalytic activity">
    <reaction evidence="1">
        <text>ATP + H2O + lipid A-core oligosaccharideSide 1 = ADP + phosphate + lipid A-core oligosaccharideSide 2.</text>
        <dbReference type="EC" id="7.5.2.6"/>
    </reaction>
</comment>
<comment type="subunit">
    <text evidence="1">Homodimer.</text>
</comment>
<comment type="subcellular location">
    <subcellularLocation>
        <location evidence="1">Cell membrane</location>
        <topology evidence="1">Multi-pass membrane protein</topology>
    </subcellularLocation>
</comment>
<comment type="domain">
    <text evidence="1">In MsbA the ATP-binding domain (NBD) and the transmembrane domain (TMD) are fused.</text>
</comment>
<comment type="similarity">
    <text evidence="1">Belongs to the ABC transporter superfamily. Lipid exporter (TC 3.A.1.106) family.</text>
</comment>
<comment type="sequence caution" evidence="3">
    <conflict type="frameshift">
        <sequence resource="EMBL-CDS" id="AAD15237"/>
    </conflict>
</comment>
<organism>
    <name type="scientific">Francisella novicida</name>
    <dbReference type="NCBI Taxonomy" id="264"/>
    <lineage>
        <taxon>Bacteria</taxon>
        <taxon>Pseudomonadati</taxon>
        <taxon>Pseudomonadota</taxon>
        <taxon>Gammaproteobacteria</taxon>
        <taxon>Thiotrichales</taxon>
        <taxon>Francisellaceae</taxon>
        <taxon>Francisella</taxon>
    </lineage>
</organism>
<dbReference type="EC" id="7.5.2.6" evidence="1"/>
<dbReference type="EMBL" id="L17003">
    <property type="protein sequence ID" value="AAD15237.1"/>
    <property type="status" value="ALT_FRAME"/>
    <property type="molecule type" value="Genomic_DNA"/>
</dbReference>
<dbReference type="SMR" id="Q47908"/>
<dbReference type="STRING" id="676032.FN3523_1670"/>
<dbReference type="GO" id="GO:0005886">
    <property type="term" value="C:plasma membrane"/>
    <property type="evidence" value="ECO:0007669"/>
    <property type="project" value="UniProtKB-SubCell"/>
</dbReference>
<dbReference type="GO" id="GO:0140359">
    <property type="term" value="F:ABC-type transporter activity"/>
    <property type="evidence" value="ECO:0007669"/>
    <property type="project" value="InterPro"/>
</dbReference>
<dbReference type="GO" id="GO:0005524">
    <property type="term" value="F:ATP binding"/>
    <property type="evidence" value="ECO:0007669"/>
    <property type="project" value="UniProtKB-KW"/>
</dbReference>
<dbReference type="GO" id="GO:0016887">
    <property type="term" value="F:ATP hydrolysis activity"/>
    <property type="evidence" value="ECO:0007669"/>
    <property type="project" value="InterPro"/>
</dbReference>
<dbReference type="GO" id="GO:0034040">
    <property type="term" value="F:ATPase-coupled lipid transmembrane transporter activity"/>
    <property type="evidence" value="ECO:0007669"/>
    <property type="project" value="InterPro"/>
</dbReference>
<dbReference type="CDD" id="cd18552">
    <property type="entry name" value="ABC_6TM_MsbA_like"/>
    <property type="match status" value="1"/>
</dbReference>
<dbReference type="FunFam" id="3.40.50.300:FF:000140">
    <property type="entry name" value="Lipid A export ATP-binding/permease protein MsbA"/>
    <property type="match status" value="1"/>
</dbReference>
<dbReference type="Gene3D" id="1.20.1560.10">
    <property type="entry name" value="ABC transporter type 1, transmembrane domain"/>
    <property type="match status" value="1"/>
</dbReference>
<dbReference type="Gene3D" id="3.40.50.300">
    <property type="entry name" value="P-loop containing nucleotide triphosphate hydrolases"/>
    <property type="match status" value="1"/>
</dbReference>
<dbReference type="InterPro" id="IPR003593">
    <property type="entry name" value="AAA+_ATPase"/>
</dbReference>
<dbReference type="InterPro" id="IPR011527">
    <property type="entry name" value="ABC1_TM_dom"/>
</dbReference>
<dbReference type="InterPro" id="IPR036640">
    <property type="entry name" value="ABC1_TM_sf"/>
</dbReference>
<dbReference type="InterPro" id="IPR003439">
    <property type="entry name" value="ABC_transporter-like_ATP-bd"/>
</dbReference>
<dbReference type="InterPro" id="IPR017871">
    <property type="entry name" value="ABC_transporter-like_CS"/>
</dbReference>
<dbReference type="InterPro" id="IPR011917">
    <property type="entry name" value="ABC_transpr_lipidA"/>
</dbReference>
<dbReference type="InterPro" id="IPR027417">
    <property type="entry name" value="P-loop_NTPase"/>
</dbReference>
<dbReference type="InterPro" id="IPR039421">
    <property type="entry name" value="Type_1_exporter"/>
</dbReference>
<dbReference type="NCBIfam" id="TIGR02203">
    <property type="entry name" value="MsbA_lipidA"/>
    <property type="match status" value="1"/>
</dbReference>
<dbReference type="PANTHER" id="PTHR24221">
    <property type="entry name" value="ATP-BINDING CASSETTE SUB-FAMILY B"/>
    <property type="match status" value="1"/>
</dbReference>
<dbReference type="PANTHER" id="PTHR24221:SF632">
    <property type="entry name" value="ATP-DEPENDENT LIPID A-CORE FLIPPASE"/>
    <property type="match status" value="1"/>
</dbReference>
<dbReference type="Pfam" id="PF00664">
    <property type="entry name" value="ABC_membrane"/>
    <property type="match status" value="1"/>
</dbReference>
<dbReference type="Pfam" id="PF00005">
    <property type="entry name" value="ABC_tran"/>
    <property type="match status" value="1"/>
</dbReference>
<dbReference type="SMART" id="SM00382">
    <property type="entry name" value="AAA"/>
    <property type="match status" value="1"/>
</dbReference>
<dbReference type="SUPFAM" id="SSF90123">
    <property type="entry name" value="ABC transporter transmembrane region"/>
    <property type="match status" value="1"/>
</dbReference>
<dbReference type="SUPFAM" id="SSF52540">
    <property type="entry name" value="P-loop containing nucleoside triphosphate hydrolases"/>
    <property type="match status" value="1"/>
</dbReference>
<dbReference type="PROSITE" id="PS50929">
    <property type="entry name" value="ABC_TM1F"/>
    <property type="match status" value="1"/>
</dbReference>
<dbReference type="PROSITE" id="PS00211">
    <property type="entry name" value="ABC_TRANSPORTER_1"/>
    <property type="match status" value="1"/>
</dbReference>
<dbReference type="PROSITE" id="PS50893">
    <property type="entry name" value="ABC_TRANSPORTER_2"/>
    <property type="match status" value="1"/>
</dbReference>
<dbReference type="PROSITE" id="PS51239">
    <property type="entry name" value="MSBA"/>
    <property type="match status" value="1"/>
</dbReference>
<evidence type="ECO:0000255" key="1">
    <source>
        <dbReference type="HAMAP-Rule" id="MF_01703"/>
    </source>
</evidence>
<evidence type="ECO:0000269" key="2">
    <source>
    </source>
</evidence>
<evidence type="ECO:0000305" key="3"/>
<feature type="chain" id="PRO_0000092581" description="ATP-dependent lipid A-core flippase">
    <location>
        <begin position="1"/>
        <end position="593"/>
    </location>
</feature>
<feature type="transmembrane region" description="Helical" evidence="1">
    <location>
        <begin position="33"/>
        <end position="55"/>
    </location>
</feature>
<feature type="transmembrane region" description="Helical" evidence="1">
    <location>
        <begin position="67"/>
        <end position="87"/>
    </location>
</feature>
<feature type="transmembrane region" description="Helical" evidence="1">
    <location>
        <begin position="146"/>
        <end position="166"/>
    </location>
</feature>
<feature type="transmembrane region" description="Helical" evidence="1">
    <location>
        <begin position="169"/>
        <end position="189"/>
    </location>
</feature>
<feature type="transmembrane region" description="Helical" evidence="1">
    <location>
        <begin position="258"/>
        <end position="278"/>
    </location>
</feature>
<feature type="transmembrane region" description="Helical" evidence="1">
    <location>
        <begin position="284"/>
        <end position="304"/>
    </location>
</feature>
<feature type="domain" description="ABC transmembrane type-1" evidence="1">
    <location>
        <begin position="38"/>
        <end position="319"/>
    </location>
</feature>
<feature type="domain" description="ABC transporter" evidence="1">
    <location>
        <begin position="351"/>
        <end position="585"/>
    </location>
</feature>
<feature type="binding site" evidence="1">
    <location>
        <begin position="383"/>
        <end position="390"/>
    </location>
    <ligand>
        <name>ATP</name>
        <dbReference type="ChEBI" id="CHEBI:30616"/>
    </ligand>
</feature>
<proteinExistence type="inferred from homology"/>
<reference key="1">
    <citation type="journal article" date="1994" name="Microbiology">
        <title>Serum-sensitive mutation of Francisella novicida: association with an ABC transporter gene.</title>
        <authorList>
            <person name="Mdluli K.E."/>
            <person name="Anthony L.S."/>
            <person name="Baron G.S."/>
            <person name="McDonald M.K."/>
            <person name="Myltseva S.V."/>
            <person name="Nano F.E."/>
        </authorList>
    </citation>
    <scope>NUCLEOTIDE SEQUENCE [GENOMIC DNA]</scope>
    <source>
        <strain>U112</strain>
    </source>
</reference>
<reference key="2">
    <citation type="journal article" date="1997" name="J. Bacteriol.">
        <title>Temperature-sensitive lesions in the Francisella novicida valA gene cloned into an Escherichia coli msbA lpxK mutant affecting deoxycholate resistance and lipopolysaccharide assembly at the restrictive temperature.</title>
        <authorList>
            <person name="McDonald M.K."/>
            <person name="Cowley S.C."/>
            <person name="Nano F.E."/>
        </authorList>
    </citation>
    <scope>FUNCTION</scope>
</reference>
<accession>Q47908</accession>
<sequence length="593" mass="65130">MTNHQKVGTLYKRLLLQVKHLMAFSAFGCYRKYIFLSADASMIYLINPILNYGFGPGGGITKQSATILMLMGVGMVGFIALRSVGSFVSQYFIGSLGQKVVYKFRKDIYKRLMDLPASFFDKHSTGQIISRLLYNVDQVTEATSTAIITVVQDGTFVIGLIVVMFVSSWQLSLFLIVVGPFLGLFISIINKKFRNLSRNTQSSMGNVTHTAEETIRNYKEIRIFGAQQKQQNKFFKNLDYTYSQQIRTIALDALTSPVIQIIASLVLAFSLFTIAIFGTNDGGGSSWLTAGSFASFFAAAAAILKPIKNLTKVNVVIQKAVAATEDIFYILDYPAEKETGSKELAKVDGNVTIKDLSFAFGEHKVLSGVSVDIKAGQTVAFVGKSGSGKTTLTSIISRFYTQHKGEILLDGVDTRELTLENLRSHLSIVSQNVHLFDDTVYNNIAFGLSREVSEDEVIDALKRANAYEFVQELSDGIHTNIGNNGSKLSGGQRQRISIARALLKNAPVLIFDEATSALDNESERVVQQALESLTESCTTIVIAHRLSTVENADKIVVMDGGKVVESGKHQELLEQGGLYTGSINRDFNSTYAR</sequence>